<sequence>SKSSIETPPSYNQLNYNENLQRFFNSKPVTAPVETDPIKMEQSYSTPANTGSNLSPMQCFEDSGGSGSSRNCTSGSNLNMGSVTNTSNTGTGTSSGSAPLVTLTESLLK</sequence>
<evidence type="ECO:0000250" key="1"/>
<evidence type="ECO:0000256" key="2">
    <source>
        <dbReference type="SAM" id="MobiDB-lite"/>
    </source>
</evidence>
<accession>Q25435</accession>
<gene>
    <name type="primary">per</name>
</gene>
<comment type="function">
    <text evidence="1">Essential for biological clock functions. Determines the period length of circadian and ultradian rhythms; an increase in PER dosage leads to shortened circadian rhythms and a decrease leads to lengthened circadian rhythms. Essential for the circadian rhythmicity of locomotor activity, eclosion behavior, and for the rhythmic component of the male courtship song that originates in the thoracic nervous system. The biological cycle depends on the rhythmic formation and nuclear localization of the TIM-PER complex. Light induces the degradation of TIM, which promotes elimination of PER. Nuclear activity of the heterodimer coordinatively regulates PER and TIM transcription through a negative feedback loop. Behaves as a negative element in circadian transcriptional loop. Does not appear to bind DNA, suggesting indirect transcriptional inhibition (By similarity).</text>
</comment>
<comment type="subunit">
    <text evidence="1">Forms a heterodimer with timeless (TIM); the complex then translocates into the nucleus.</text>
</comment>
<comment type="subcellular location">
    <subcellularLocation>
        <location evidence="1">Nucleus</location>
    </subcellularLocation>
    <subcellularLocation>
        <location evidence="1">Cytoplasm</location>
        <location evidence="1">Perinuclear region</location>
    </subcellularLocation>
    <text evidence="1">Nuclear at specific periods of the day. First accumulates in the perinuclear region about one hour before translocation into the nucleus. Interaction with Tim is required for nuclear localization (By similarity).</text>
</comment>
<comment type="PTM">
    <text evidence="1">Phosphorylated with a circadian rhythmicity, probably by the double-time protein (dbt). Phosphorylation could be implicated in the stability of per monomer and in the formation of heterodimer per-tim (By similarity).</text>
</comment>
<protein>
    <recommendedName>
        <fullName>Period circadian protein</fullName>
    </recommendedName>
</protein>
<dbReference type="EMBL" id="U11805">
    <property type="protein sequence ID" value="AAA76594.1"/>
    <property type="molecule type" value="Genomic_DNA"/>
</dbReference>
<dbReference type="STRING" id="7370.Q25435"/>
<dbReference type="EnsemblMetazoa" id="MDOA015102-RA">
    <property type="protein sequence ID" value="MDOA015102-PA"/>
    <property type="gene ID" value="MDOA015102"/>
</dbReference>
<dbReference type="VEuPathDB" id="VectorBase:MDOA015102"/>
<dbReference type="VEuPathDB" id="VectorBase:MDOMA2_016129"/>
<dbReference type="eggNOG" id="KOG3753">
    <property type="taxonomic scope" value="Eukaryota"/>
</dbReference>
<dbReference type="Proteomes" id="UP000694905">
    <property type="component" value="Unplaced"/>
</dbReference>
<dbReference type="GO" id="GO:0005634">
    <property type="term" value="C:nucleus"/>
    <property type="evidence" value="ECO:0007669"/>
    <property type="project" value="UniProtKB-SubCell"/>
</dbReference>
<dbReference type="GO" id="GO:0048471">
    <property type="term" value="C:perinuclear region of cytoplasm"/>
    <property type="evidence" value="ECO:0007669"/>
    <property type="project" value="UniProtKB-SubCell"/>
</dbReference>
<dbReference type="GO" id="GO:0048511">
    <property type="term" value="P:rhythmic process"/>
    <property type="evidence" value="ECO:0007669"/>
    <property type="project" value="UniProtKB-KW"/>
</dbReference>
<organism>
    <name type="scientific">Musca domestica</name>
    <name type="common">House fly</name>
    <dbReference type="NCBI Taxonomy" id="7370"/>
    <lineage>
        <taxon>Eukaryota</taxon>
        <taxon>Metazoa</taxon>
        <taxon>Ecdysozoa</taxon>
        <taxon>Arthropoda</taxon>
        <taxon>Hexapoda</taxon>
        <taxon>Insecta</taxon>
        <taxon>Pterygota</taxon>
        <taxon>Neoptera</taxon>
        <taxon>Endopterygota</taxon>
        <taxon>Diptera</taxon>
        <taxon>Brachycera</taxon>
        <taxon>Muscomorpha</taxon>
        <taxon>Muscoidea</taxon>
        <taxon>Muscidae</taxon>
        <taxon>Musca</taxon>
    </lineage>
</organism>
<reference key="1">
    <citation type="journal article" date="1994" name="Mol. Biol. Evol.">
        <title>Big flies, small repeats: the 'Thr-Gly' region of the period gene in Diptera.</title>
        <authorList>
            <person name="Nielsen J."/>
            <person name="Peixoto A.A."/>
            <person name="Piccin A."/>
            <person name="Costa R."/>
            <person name="Kyriacou C.P."/>
            <person name="Chalmers D."/>
        </authorList>
    </citation>
    <scope>NUCLEOTIDE SEQUENCE [GENOMIC DNA]</scope>
    <source>
        <strain>WHO</strain>
    </source>
</reference>
<name>PER_MUSDO</name>
<keyword id="KW-0090">Biological rhythms</keyword>
<keyword id="KW-0963">Cytoplasm</keyword>
<keyword id="KW-0539">Nucleus</keyword>
<keyword id="KW-0597">Phosphoprotein</keyword>
<keyword id="KW-1185">Reference proteome</keyword>
<keyword id="KW-0677">Repeat</keyword>
<feature type="chain" id="PRO_0000162622" description="Period circadian protein">
    <location>
        <begin position="1" status="less than"/>
        <end position="109" status="greater than"/>
    </location>
</feature>
<feature type="region of interest" description="Disordered" evidence="2">
    <location>
        <begin position="42"/>
        <end position="109"/>
    </location>
</feature>
<feature type="compositionally biased region" description="Polar residues" evidence="2">
    <location>
        <begin position="42"/>
        <end position="56"/>
    </location>
</feature>
<feature type="compositionally biased region" description="Polar residues" evidence="2">
    <location>
        <begin position="68"/>
        <end position="80"/>
    </location>
</feature>
<feature type="compositionally biased region" description="Low complexity" evidence="2">
    <location>
        <begin position="81"/>
        <end position="97"/>
    </location>
</feature>
<feature type="non-terminal residue">
    <location>
        <position position="1"/>
    </location>
</feature>
<feature type="non-terminal residue">
    <location>
        <position position="109"/>
    </location>
</feature>
<proteinExistence type="inferred from homology"/>